<reference key="1">
    <citation type="journal article" date="2008" name="PLoS Genet.">
        <title>Genomic islands in the pathogenic filamentous fungus Aspergillus fumigatus.</title>
        <authorList>
            <person name="Fedorova N.D."/>
            <person name="Khaldi N."/>
            <person name="Joardar V.S."/>
            <person name="Maiti R."/>
            <person name="Amedeo P."/>
            <person name="Anderson M.J."/>
            <person name="Crabtree J."/>
            <person name="Silva J.C."/>
            <person name="Badger J.H."/>
            <person name="Albarraq A."/>
            <person name="Angiuoli S."/>
            <person name="Bussey H."/>
            <person name="Bowyer P."/>
            <person name="Cotty P.J."/>
            <person name="Dyer P.S."/>
            <person name="Egan A."/>
            <person name="Galens K."/>
            <person name="Fraser-Liggett C.M."/>
            <person name="Haas B.J."/>
            <person name="Inman J.M."/>
            <person name="Kent R."/>
            <person name="Lemieux S."/>
            <person name="Malavazi I."/>
            <person name="Orvis J."/>
            <person name="Roemer T."/>
            <person name="Ronning C.M."/>
            <person name="Sundaram J.P."/>
            <person name="Sutton G."/>
            <person name="Turner G."/>
            <person name="Venter J.C."/>
            <person name="White O.R."/>
            <person name="Whitty B.R."/>
            <person name="Youngman P."/>
            <person name="Wolfe K.H."/>
            <person name="Goldman G.H."/>
            <person name="Wortman J.R."/>
            <person name="Jiang B."/>
            <person name="Denning D.W."/>
            <person name="Nierman W.C."/>
        </authorList>
    </citation>
    <scope>NUCLEOTIDE SEQUENCE [LARGE SCALE GENOMIC DNA]</scope>
    <source>
        <strain>ATCC 1007 / CBS 513.65 / DSM 816 / NCTC 3887 / NRRL 1 / QM 1276 / 107</strain>
    </source>
</reference>
<sequence length="278" mass="30905">MHELLLFASVPAHQHHELLQQLAGLTAMQPQHRFERRLIFKAYRKPGLVNVRVGASQDVQGAEMQRLNKMLNGGMFYTQVVGPVAAADFGAPAPTVSVGDQDAQMSGMGVGVSAGVDEKPSTRPHRYDYDDQPWKLEFRDIPEAGTRSAVTARLMASASLPRGDIMVPMNAWGYNFVTEYAVEGDIFILHDIVIFLHRVLHYPTESQEPRRQLPALPEMTPLERSGSYVLQAAITVQDGASQETMKIASQHLFGLREQLKSAVRLEMADRLSLDTRAK</sequence>
<keyword id="KW-0010">Activator</keyword>
<keyword id="KW-0539">Nucleus</keyword>
<keyword id="KW-1185">Reference proteome</keyword>
<keyword id="KW-0804">Transcription</keyword>
<keyword id="KW-0805">Transcription regulation</keyword>
<gene>
    <name type="primary">srb5</name>
    <name type="synonym">med18</name>
    <name type="ORF">ACLA_088610</name>
</gene>
<organism>
    <name type="scientific">Aspergillus clavatus (strain ATCC 1007 / CBS 513.65 / DSM 816 / NCTC 3887 / NRRL 1 / QM 1276 / 107)</name>
    <dbReference type="NCBI Taxonomy" id="344612"/>
    <lineage>
        <taxon>Eukaryota</taxon>
        <taxon>Fungi</taxon>
        <taxon>Dikarya</taxon>
        <taxon>Ascomycota</taxon>
        <taxon>Pezizomycotina</taxon>
        <taxon>Eurotiomycetes</taxon>
        <taxon>Eurotiomycetidae</taxon>
        <taxon>Eurotiales</taxon>
        <taxon>Aspergillaceae</taxon>
        <taxon>Aspergillus</taxon>
        <taxon>Aspergillus subgen. Fumigati</taxon>
    </lineage>
</organism>
<dbReference type="EMBL" id="DS027052">
    <property type="protein sequence ID" value="EAW11172.1"/>
    <property type="molecule type" value="Genomic_DNA"/>
</dbReference>
<dbReference type="RefSeq" id="XP_001272598.1">
    <property type="nucleotide sequence ID" value="XM_001272597.1"/>
</dbReference>
<dbReference type="SMR" id="A1CE73"/>
<dbReference type="STRING" id="344612.A1CE73"/>
<dbReference type="EnsemblFungi" id="EAW11172">
    <property type="protein sequence ID" value="EAW11172"/>
    <property type="gene ID" value="ACLA_088610"/>
</dbReference>
<dbReference type="GeneID" id="4704935"/>
<dbReference type="KEGG" id="act:ACLA_088610"/>
<dbReference type="VEuPathDB" id="FungiDB:ACLA_088610"/>
<dbReference type="eggNOG" id="ENOG502S7EN">
    <property type="taxonomic scope" value="Eukaryota"/>
</dbReference>
<dbReference type="HOGENOM" id="CLU_084516_0_0_1"/>
<dbReference type="OMA" id="PVHQHHE"/>
<dbReference type="OrthoDB" id="5348092at2759"/>
<dbReference type="Proteomes" id="UP000006701">
    <property type="component" value="Unassembled WGS sequence"/>
</dbReference>
<dbReference type="GO" id="GO:0070847">
    <property type="term" value="C:core mediator complex"/>
    <property type="evidence" value="ECO:0007669"/>
    <property type="project" value="TreeGrafter"/>
</dbReference>
<dbReference type="GO" id="GO:0016592">
    <property type="term" value="C:mediator complex"/>
    <property type="evidence" value="ECO:0007669"/>
    <property type="project" value="InterPro"/>
</dbReference>
<dbReference type="GO" id="GO:0003712">
    <property type="term" value="F:transcription coregulator activity"/>
    <property type="evidence" value="ECO:0007669"/>
    <property type="project" value="InterPro"/>
</dbReference>
<dbReference type="GO" id="GO:0006357">
    <property type="term" value="P:regulation of transcription by RNA polymerase II"/>
    <property type="evidence" value="ECO:0007669"/>
    <property type="project" value="InterPro"/>
</dbReference>
<dbReference type="GO" id="GO:0006369">
    <property type="term" value="P:termination of RNA polymerase II transcription"/>
    <property type="evidence" value="ECO:0007669"/>
    <property type="project" value="TreeGrafter"/>
</dbReference>
<dbReference type="FunFam" id="2.40.320.10:FF:000007">
    <property type="entry name" value="Mediator of RNA polymerase II transcription subunit 18"/>
    <property type="match status" value="1"/>
</dbReference>
<dbReference type="Gene3D" id="2.40.320.10">
    <property type="entry name" value="Hypothetical Protein Pfu-838710-001"/>
    <property type="match status" value="1"/>
</dbReference>
<dbReference type="InterPro" id="IPR019095">
    <property type="entry name" value="Mediator_Med18"/>
</dbReference>
<dbReference type="PANTHER" id="PTHR13321:SF2">
    <property type="entry name" value="MEDIATOR OF RNA POLYMERASE II TRANSCRIPTION SUBUNIT 18"/>
    <property type="match status" value="1"/>
</dbReference>
<dbReference type="PANTHER" id="PTHR13321">
    <property type="entry name" value="MEDIATOR OF RNA POLYMERASE II TRANSCRIPTION, SUBUNIT 18"/>
    <property type="match status" value="1"/>
</dbReference>
<dbReference type="Pfam" id="PF09637">
    <property type="entry name" value="Med18"/>
    <property type="match status" value="1"/>
</dbReference>
<feature type="chain" id="PRO_0000304753" description="Mediator of RNA polymerase II transcription subunit 18">
    <location>
        <begin position="1"/>
        <end position="278"/>
    </location>
</feature>
<evidence type="ECO:0000250" key="1"/>
<evidence type="ECO:0000305" key="2"/>
<protein>
    <recommendedName>
        <fullName>Mediator of RNA polymerase II transcription subunit 18</fullName>
    </recommendedName>
    <alternativeName>
        <fullName>Mediator complex subunit 18</fullName>
    </alternativeName>
</protein>
<proteinExistence type="inferred from homology"/>
<name>MED18_ASPCL</name>
<accession>A1CE73</accession>
<comment type="function">
    <text evidence="1">Component of the Mediator complex, a coactivator involved in the regulated transcription of nearly all RNA polymerase II-dependent genes. Mediator functions as a bridge to convey information from gene-specific regulatory proteins to the basal RNA polymerase II transcription machinery. Mediator is recruited to promoters by direct interactions with regulatory proteins and serves as a scaffold for the assembly of a functional preinitiation complex with RNA polymerase II and the general transcription factors (By similarity).</text>
</comment>
<comment type="subunit">
    <text evidence="1">Component of the Mediator complex.</text>
</comment>
<comment type="subcellular location">
    <subcellularLocation>
        <location evidence="1">Nucleus</location>
    </subcellularLocation>
</comment>
<comment type="similarity">
    <text evidence="2">Belongs to the Mediator complex subunit 18 family.</text>
</comment>